<dbReference type="EC" id="2.7.7.56" evidence="1"/>
<dbReference type="EMBL" id="AP008229">
    <property type="protein sequence ID" value="BAE67795.1"/>
    <property type="molecule type" value="Genomic_DNA"/>
</dbReference>
<dbReference type="RefSeq" id="WP_011257981.1">
    <property type="nucleotide sequence ID" value="NC_007705.1"/>
</dbReference>
<dbReference type="SMR" id="Q2P6N2"/>
<dbReference type="KEGG" id="xom:XOO1040"/>
<dbReference type="HOGENOM" id="CLU_050858_0_0_6"/>
<dbReference type="GO" id="GO:0000175">
    <property type="term" value="F:3'-5'-RNA exonuclease activity"/>
    <property type="evidence" value="ECO:0007669"/>
    <property type="project" value="UniProtKB-UniRule"/>
</dbReference>
<dbReference type="GO" id="GO:0000049">
    <property type="term" value="F:tRNA binding"/>
    <property type="evidence" value="ECO:0007669"/>
    <property type="project" value="UniProtKB-UniRule"/>
</dbReference>
<dbReference type="GO" id="GO:0009022">
    <property type="term" value="F:tRNA nucleotidyltransferase activity"/>
    <property type="evidence" value="ECO:0007669"/>
    <property type="project" value="UniProtKB-UniRule"/>
</dbReference>
<dbReference type="GO" id="GO:0016075">
    <property type="term" value="P:rRNA catabolic process"/>
    <property type="evidence" value="ECO:0007669"/>
    <property type="project" value="UniProtKB-UniRule"/>
</dbReference>
<dbReference type="GO" id="GO:0006364">
    <property type="term" value="P:rRNA processing"/>
    <property type="evidence" value="ECO:0007669"/>
    <property type="project" value="UniProtKB-KW"/>
</dbReference>
<dbReference type="GO" id="GO:0008033">
    <property type="term" value="P:tRNA processing"/>
    <property type="evidence" value="ECO:0007669"/>
    <property type="project" value="UniProtKB-UniRule"/>
</dbReference>
<dbReference type="CDD" id="cd11362">
    <property type="entry name" value="RNase_PH_bact"/>
    <property type="match status" value="1"/>
</dbReference>
<dbReference type="FunFam" id="3.30.230.70:FF:000003">
    <property type="entry name" value="Ribonuclease PH"/>
    <property type="match status" value="1"/>
</dbReference>
<dbReference type="Gene3D" id="3.30.230.70">
    <property type="entry name" value="GHMP Kinase, N-terminal domain"/>
    <property type="match status" value="1"/>
</dbReference>
<dbReference type="HAMAP" id="MF_00564">
    <property type="entry name" value="RNase_PH"/>
    <property type="match status" value="1"/>
</dbReference>
<dbReference type="InterPro" id="IPR001247">
    <property type="entry name" value="ExoRNase_PH_dom1"/>
</dbReference>
<dbReference type="InterPro" id="IPR015847">
    <property type="entry name" value="ExoRNase_PH_dom2"/>
</dbReference>
<dbReference type="InterPro" id="IPR036345">
    <property type="entry name" value="ExoRNase_PH_dom2_sf"/>
</dbReference>
<dbReference type="InterPro" id="IPR027408">
    <property type="entry name" value="PNPase/RNase_PH_dom_sf"/>
</dbReference>
<dbReference type="InterPro" id="IPR020568">
    <property type="entry name" value="Ribosomal_Su5_D2-typ_SF"/>
</dbReference>
<dbReference type="InterPro" id="IPR050080">
    <property type="entry name" value="RNase_PH"/>
</dbReference>
<dbReference type="InterPro" id="IPR002381">
    <property type="entry name" value="RNase_PH_bac-type"/>
</dbReference>
<dbReference type="InterPro" id="IPR018336">
    <property type="entry name" value="RNase_PH_CS"/>
</dbReference>
<dbReference type="NCBIfam" id="TIGR01966">
    <property type="entry name" value="RNasePH"/>
    <property type="match status" value="1"/>
</dbReference>
<dbReference type="PANTHER" id="PTHR11953">
    <property type="entry name" value="EXOSOME COMPLEX COMPONENT"/>
    <property type="match status" value="1"/>
</dbReference>
<dbReference type="PANTHER" id="PTHR11953:SF0">
    <property type="entry name" value="EXOSOME COMPLEX COMPONENT RRP41"/>
    <property type="match status" value="1"/>
</dbReference>
<dbReference type="Pfam" id="PF01138">
    <property type="entry name" value="RNase_PH"/>
    <property type="match status" value="1"/>
</dbReference>
<dbReference type="Pfam" id="PF03725">
    <property type="entry name" value="RNase_PH_C"/>
    <property type="match status" value="1"/>
</dbReference>
<dbReference type="SUPFAM" id="SSF55666">
    <property type="entry name" value="Ribonuclease PH domain 2-like"/>
    <property type="match status" value="1"/>
</dbReference>
<dbReference type="SUPFAM" id="SSF54211">
    <property type="entry name" value="Ribosomal protein S5 domain 2-like"/>
    <property type="match status" value="1"/>
</dbReference>
<dbReference type="PROSITE" id="PS01277">
    <property type="entry name" value="RIBONUCLEASE_PH"/>
    <property type="match status" value="1"/>
</dbReference>
<accession>Q2P6N2</accession>
<gene>
    <name evidence="1" type="primary">rph</name>
    <name type="ordered locus">XOO1040</name>
</gene>
<sequence length="241" mass="25948">MTFSRPSGRTADQLRPVRIERAFTRHAEGSVLVSFGDTHVLCTASVENRVPNFLRGKGEGWVTAEYGMLPRSTHTRSDREAARGKQGGRTLEIQRLIGRALRACVDRNALGERTITLDCDVLQADGGTRTAAITGAYVALADAVNLLLKRGEIKKHPLIGAVAAVSVGIYRGEPVLDLDYPEDSDCDTDMNVVMNDGGGFIELQGTAEGHAFRRDELNALLALAEKGMGDLFALQRAALAG</sequence>
<evidence type="ECO:0000255" key="1">
    <source>
        <dbReference type="HAMAP-Rule" id="MF_00564"/>
    </source>
</evidence>
<feature type="chain" id="PRO_1000024906" description="Ribonuclease PH">
    <location>
        <begin position="1"/>
        <end position="241"/>
    </location>
</feature>
<feature type="binding site" evidence="1">
    <location>
        <position position="89"/>
    </location>
    <ligand>
        <name>phosphate</name>
        <dbReference type="ChEBI" id="CHEBI:43474"/>
        <note>substrate</note>
    </ligand>
</feature>
<feature type="binding site" evidence="1">
    <location>
        <begin position="127"/>
        <end position="129"/>
    </location>
    <ligand>
        <name>phosphate</name>
        <dbReference type="ChEBI" id="CHEBI:43474"/>
        <note>substrate</note>
    </ligand>
</feature>
<reference key="1">
    <citation type="journal article" date="2005" name="Jpn. Agric. Res. Q.">
        <title>Genome sequence of Xanthomonas oryzae pv. oryzae suggests contribution of large numbers of effector genes and insertion sequences to its race diversity.</title>
        <authorList>
            <person name="Ochiai H."/>
            <person name="Inoue Y."/>
            <person name="Takeya M."/>
            <person name="Sasaki A."/>
            <person name="Kaku H."/>
        </authorList>
    </citation>
    <scope>NUCLEOTIDE SEQUENCE [LARGE SCALE GENOMIC DNA]</scope>
    <source>
        <strain>MAFF 311018</strain>
    </source>
</reference>
<protein>
    <recommendedName>
        <fullName evidence="1">Ribonuclease PH</fullName>
        <shortName evidence="1">RNase PH</shortName>
        <ecNumber evidence="1">2.7.7.56</ecNumber>
    </recommendedName>
    <alternativeName>
        <fullName evidence="1">tRNA nucleotidyltransferase</fullName>
    </alternativeName>
</protein>
<keyword id="KW-0548">Nucleotidyltransferase</keyword>
<keyword id="KW-0694">RNA-binding</keyword>
<keyword id="KW-0698">rRNA processing</keyword>
<keyword id="KW-0808">Transferase</keyword>
<keyword id="KW-0819">tRNA processing</keyword>
<keyword id="KW-0820">tRNA-binding</keyword>
<organism>
    <name type="scientific">Xanthomonas oryzae pv. oryzae (strain MAFF 311018)</name>
    <dbReference type="NCBI Taxonomy" id="342109"/>
    <lineage>
        <taxon>Bacteria</taxon>
        <taxon>Pseudomonadati</taxon>
        <taxon>Pseudomonadota</taxon>
        <taxon>Gammaproteobacteria</taxon>
        <taxon>Lysobacterales</taxon>
        <taxon>Lysobacteraceae</taxon>
        <taxon>Xanthomonas</taxon>
    </lineage>
</organism>
<proteinExistence type="inferred from homology"/>
<comment type="function">
    <text evidence="1">Phosphorolytic 3'-5' exoribonuclease that plays an important role in tRNA 3'-end maturation. Removes nucleotide residues following the 3'-CCA terminus of tRNAs; can also add nucleotides to the ends of RNA molecules by using nucleoside diphosphates as substrates, but this may not be physiologically important. Probably plays a role in initiation of 16S rRNA degradation (leading to ribosome degradation) during starvation.</text>
</comment>
<comment type="catalytic activity">
    <reaction evidence="1">
        <text>tRNA(n+1) + phosphate = tRNA(n) + a ribonucleoside 5'-diphosphate</text>
        <dbReference type="Rhea" id="RHEA:10628"/>
        <dbReference type="Rhea" id="RHEA-COMP:17343"/>
        <dbReference type="Rhea" id="RHEA-COMP:17344"/>
        <dbReference type="ChEBI" id="CHEBI:43474"/>
        <dbReference type="ChEBI" id="CHEBI:57930"/>
        <dbReference type="ChEBI" id="CHEBI:173114"/>
        <dbReference type="EC" id="2.7.7.56"/>
    </reaction>
</comment>
<comment type="subunit">
    <text evidence="1">Homohexameric ring arranged as a trimer of dimers.</text>
</comment>
<comment type="similarity">
    <text evidence="1">Belongs to the RNase PH family.</text>
</comment>
<name>RNPH_XANOM</name>